<feature type="chain" id="PRO_0000263529" description="Elongation factor G 2">
    <location>
        <begin position="1"/>
        <end position="677"/>
    </location>
</feature>
<feature type="domain" description="tr-type G">
    <location>
        <begin position="8"/>
        <end position="283"/>
    </location>
</feature>
<feature type="binding site" evidence="1">
    <location>
        <begin position="17"/>
        <end position="24"/>
    </location>
    <ligand>
        <name>GTP</name>
        <dbReference type="ChEBI" id="CHEBI:37565"/>
    </ligand>
</feature>
<feature type="binding site" evidence="1">
    <location>
        <begin position="81"/>
        <end position="85"/>
    </location>
    <ligand>
        <name>GTP</name>
        <dbReference type="ChEBI" id="CHEBI:37565"/>
    </ligand>
</feature>
<feature type="binding site" evidence="1">
    <location>
        <begin position="135"/>
        <end position="138"/>
    </location>
    <ligand>
        <name>GTP</name>
        <dbReference type="ChEBI" id="CHEBI:37565"/>
    </ligand>
</feature>
<comment type="function">
    <text evidence="1">Catalyzes the GTP-dependent ribosomal translocation step during translation elongation. During this step, the ribosome changes from the pre-translocational (PRE) to the post-translocational (POST) state as the newly formed A-site-bound peptidyl-tRNA and P-site-bound deacylated tRNA move to the P and E sites, respectively. Catalyzes the coordinated movement of the two tRNA molecules, the mRNA and conformational changes in the ribosome.</text>
</comment>
<comment type="subcellular location">
    <subcellularLocation>
        <location evidence="1">Cytoplasm</location>
    </subcellularLocation>
</comment>
<comment type="similarity">
    <text evidence="1">Belongs to the TRAFAC class translation factor GTPase superfamily. Classic translation factor GTPase family. EF-G/EF-2 subfamily.</text>
</comment>
<keyword id="KW-0963">Cytoplasm</keyword>
<keyword id="KW-0251">Elongation factor</keyword>
<keyword id="KW-0342">GTP-binding</keyword>
<keyword id="KW-0547">Nucleotide-binding</keyword>
<keyword id="KW-0648">Protein biosynthesis</keyword>
<keyword id="KW-1185">Reference proteome</keyword>
<reference key="1">
    <citation type="journal article" date="2007" name="Proc. Natl. Acad. Sci. U.S.A.">
        <title>The genome of Syntrophus aciditrophicus: life at the thermodynamic limit of microbial growth.</title>
        <authorList>
            <person name="McInerney M.J."/>
            <person name="Rohlin L."/>
            <person name="Mouttaki H."/>
            <person name="Kim U."/>
            <person name="Krupp R.S."/>
            <person name="Rios-Hernandez L."/>
            <person name="Sieber J."/>
            <person name="Struchtemeyer C.G."/>
            <person name="Bhattacharyya A."/>
            <person name="Campbell J.W."/>
            <person name="Gunsalus R.P."/>
        </authorList>
    </citation>
    <scope>NUCLEOTIDE SEQUENCE [LARGE SCALE GENOMIC DNA]</scope>
    <source>
        <strain>SB</strain>
    </source>
</reference>
<dbReference type="EMBL" id="CP000252">
    <property type="protein sequence ID" value="ABC77774.1"/>
    <property type="molecule type" value="Genomic_DNA"/>
</dbReference>
<dbReference type="RefSeq" id="WP_011417795.1">
    <property type="nucleotide sequence ID" value="NC_007759.1"/>
</dbReference>
<dbReference type="SMR" id="Q2LUL6"/>
<dbReference type="FunCoup" id="Q2LUL6">
    <property type="interactions" value="525"/>
</dbReference>
<dbReference type="STRING" id="56780.SYN_01918"/>
<dbReference type="KEGG" id="sat:SYN_01918"/>
<dbReference type="eggNOG" id="COG0480">
    <property type="taxonomic scope" value="Bacteria"/>
</dbReference>
<dbReference type="HOGENOM" id="CLU_002794_4_1_7"/>
<dbReference type="InParanoid" id="Q2LUL6"/>
<dbReference type="OrthoDB" id="9801591at2"/>
<dbReference type="Proteomes" id="UP000001933">
    <property type="component" value="Chromosome"/>
</dbReference>
<dbReference type="GO" id="GO:0005737">
    <property type="term" value="C:cytoplasm"/>
    <property type="evidence" value="ECO:0007669"/>
    <property type="project" value="UniProtKB-SubCell"/>
</dbReference>
<dbReference type="GO" id="GO:0005525">
    <property type="term" value="F:GTP binding"/>
    <property type="evidence" value="ECO:0007669"/>
    <property type="project" value="UniProtKB-UniRule"/>
</dbReference>
<dbReference type="GO" id="GO:0003924">
    <property type="term" value="F:GTPase activity"/>
    <property type="evidence" value="ECO:0007669"/>
    <property type="project" value="InterPro"/>
</dbReference>
<dbReference type="GO" id="GO:0003746">
    <property type="term" value="F:translation elongation factor activity"/>
    <property type="evidence" value="ECO:0007669"/>
    <property type="project" value="UniProtKB-UniRule"/>
</dbReference>
<dbReference type="GO" id="GO:0032790">
    <property type="term" value="P:ribosome disassembly"/>
    <property type="evidence" value="ECO:0007669"/>
    <property type="project" value="TreeGrafter"/>
</dbReference>
<dbReference type="CDD" id="cd01886">
    <property type="entry name" value="EF-G"/>
    <property type="match status" value="1"/>
</dbReference>
<dbReference type="CDD" id="cd16262">
    <property type="entry name" value="EFG_III"/>
    <property type="match status" value="1"/>
</dbReference>
<dbReference type="CDD" id="cd01680">
    <property type="entry name" value="EFG_like_IV"/>
    <property type="match status" value="1"/>
</dbReference>
<dbReference type="CDD" id="cd03713">
    <property type="entry name" value="EFG_mtEFG_C"/>
    <property type="match status" value="1"/>
</dbReference>
<dbReference type="CDD" id="cd04088">
    <property type="entry name" value="EFG_mtEFG_II"/>
    <property type="match status" value="1"/>
</dbReference>
<dbReference type="FunFam" id="2.40.30.10:FF:000006">
    <property type="entry name" value="Elongation factor G"/>
    <property type="match status" value="1"/>
</dbReference>
<dbReference type="FunFam" id="3.30.70.240:FF:000001">
    <property type="entry name" value="Elongation factor G"/>
    <property type="match status" value="1"/>
</dbReference>
<dbReference type="FunFam" id="3.30.70.870:FF:000001">
    <property type="entry name" value="Elongation factor G"/>
    <property type="match status" value="1"/>
</dbReference>
<dbReference type="FunFam" id="3.40.50.300:FF:000029">
    <property type="entry name" value="Elongation factor G"/>
    <property type="match status" value="1"/>
</dbReference>
<dbReference type="Gene3D" id="3.30.230.10">
    <property type="match status" value="1"/>
</dbReference>
<dbReference type="Gene3D" id="3.30.70.240">
    <property type="match status" value="1"/>
</dbReference>
<dbReference type="Gene3D" id="3.30.70.870">
    <property type="entry name" value="Elongation Factor G (Translational Gtpase), domain 3"/>
    <property type="match status" value="1"/>
</dbReference>
<dbReference type="Gene3D" id="3.40.50.300">
    <property type="entry name" value="P-loop containing nucleotide triphosphate hydrolases"/>
    <property type="match status" value="1"/>
</dbReference>
<dbReference type="Gene3D" id="2.40.30.10">
    <property type="entry name" value="Translation factors"/>
    <property type="match status" value="1"/>
</dbReference>
<dbReference type="HAMAP" id="MF_00054_B">
    <property type="entry name" value="EF_G_EF_2_B"/>
    <property type="match status" value="1"/>
</dbReference>
<dbReference type="InterPro" id="IPR041095">
    <property type="entry name" value="EFG_II"/>
</dbReference>
<dbReference type="InterPro" id="IPR009022">
    <property type="entry name" value="EFG_III"/>
</dbReference>
<dbReference type="InterPro" id="IPR035647">
    <property type="entry name" value="EFG_III/V"/>
</dbReference>
<dbReference type="InterPro" id="IPR035649">
    <property type="entry name" value="EFG_V"/>
</dbReference>
<dbReference type="InterPro" id="IPR000640">
    <property type="entry name" value="EFG_V-like"/>
</dbReference>
<dbReference type="InterPro" id="IPR004161">
    <property type="entry name" value="EFTu-like_2"/>
</dbReference>
<dbReference type="InterPro" id="IPR031157">
    <property type="entry name" value="G_TR_CS"/>
</dbReference>
<dbReference type="InterPro" id="IPR027417">
    <property type="entry name" value="P-loop_NTPase"/>
</dbReference>
<dbReference type="InterPro" id="IPR020568">
    <property type="entry name" value="Ribosomal_Su5_D2-typ_SF"/>
</dbReference>
<dbReference type="InterPro" id="IPR014721">
    <property type="entry name" value="Ribsml_uS5_D2-typ_fold_subgr"/>
</dbReference>
<dbReference type="InterPro" id="IPR005225">
    <property type="entry name" value="Small_GTP-bd"/>
</dbReference>
<dbReference type="InterPro" id="IPR000795">
    <property type="entry name" value="T_Tr_GTP-bd_dom"/>
</dbReference>
<dbReference type="InterPro" id="IPR009000">
    <property type="entry name" value="Transl_B-barrel_sf"/>
</dbReference>
<dbReference type="InterPro" id="IPR004540">
    <property type="entry name" value="Transl_elong_EFG/EF2"/>
</dbReference>
<dbReference type="InterPro" id="IPR005517">
    <property type="entry name" value="Transl_elong_EFG/EF2_IV"/>
</dbReference>
<dbReference type="NCBIfam" id="TIGR00484">
    <property type="entry name" value="EF-G"/>
    <property type="match status" value="1"/>
</dbReference>
<dbReference type="NCBIfam" id="NF009381">
    <property type="entry name" value="PRK12740.1-5"/>
    <property type="match status" value="1"/>
</dbReference>
<dbReference type="NCBIfam" id="TIGR00231">
    <property type="entry name" value="small_GTP"/>
    <property type="match status" value="1"/>
</dbReference>
<dbReference type="PANTHER" id="PTHR43261:SF1">
    <property type="entry name" value="RIBOSOME-RELEASING FACTOR 2, MITOCHONDRIAL"/>
    <property type="match status" value="1"/>
</dbReference>
<dbReference type="PANTHER" id="PTHR43261">
    <property type="entry name" value="TRANSLATION ELONGATION FACTOR G-RELATED"/>
    <property type="match status" value="1"/>
</dbReference>
<dbReference type="Pfam" id="PF00679">
    <property type="entry name" value="EFG_C"/>
    <property type="match status" value="1"/>
</dbReference>
<dbReference type="Pfam" id="PF14492">
    <property type="entry name" value="EFG_III"/>
    <property type="match status" value="1"/>
</dbReference>
<dbReference type="Pfam" id="PF03764">
    <property type="entry name" value="EFG_IV"/>
    <property type="match status" value="1"/>
</dbReference>
<dbReference type="Pfam" id="PF00009">
    <property type="entry name" value="GTP_EFTU"/>
    <property type="match status" value="1"/>
</dbReference>
<dbReference type="Pfam" id="PF03144">
    <property type="entry name" value="GTP_EFTU_D2"/>
    <property type="match status" value="1"/>
</dbReference>
<dbReference type="PRINTS" id="PR00315">
    <property type="entry name" value="ELONGATNFCT"/>
</dbReference>
<dbReference type="SMART" id="SM00838">
    <property type="entry name" value="EFG_C"/>
    <property type="match status" value="1"/>
</dbReference>
<dbReference type="SMART" id="SM00889">
    <property type="entry name" value="EFG_IV"/>
    <property type="match status" value="1"/>
</dbReference>
<dbReference type="SUPFAM" id="SSF54980">
    <property type="entry name" value="EF-G C-terminal domain-like"/>
    <property type="match status" value="2"/>
</dbReference>
<dbReference type="SUPFAM" id="SSF52540">
    <property type="entry name" value="P-loop containing nucleoside triphosphate hydrolases"/>
    <property type="match status" value="1"/>
</dbReference>
<dbReference type="SUPFAM" id="SSF54211">
    <property type="entry name" value="Ribosomal protein S5 domain 2-like"/>
    <property type="match status" value="1"/>
</dbReference>
<dbReference type="SUPFAM" id="SSF50447">
    <property type="entry name" value="Translation proteins"/>
    <property type="match status" value="1"/>
</dbReference>
<dbReference type="PROSITE" id="PS00301">
    <property type="entry name" value="G_TR_1"/>
    <property type="match status" value="1"/>
</dbReference>
<dbReference type="PROSITE" id="PS51722">
    <property type="entry name" value="G_TR_2"/>
    <property type="match status" value="1"/>
</dbReference>
<protein>
    <recommendedName>
        <fullName evidence="1">Elongation factor G 2</fullName>
        <shortName evidence="1">EF-G 2</shortName>
    </recommendedName>
</protein>
<sequence>MPPKSRLSRIRNIGIIAHIDAGKTTVSERILYYTGKSYKIGEVHDGEAVMDWMPQEQERGITISSAVTTCNWANHEIHIIDTPGHVDFTIEVERSLRVLDGAVVVFDAVAGVEPQSETVWHQADKYGVPKIAFINKMDRVGADYFRVVKMMKERFASVPLPIQIPLGQQDQFLGVVDLIREKVVTWDDGSKGVNYQYSEIPGDREADAKANREIMLEILAEVDDGIAEKYLEGEEISESDLLRAIREATLANRLVPVMCGSALKNKGIQPVLDAVVNFLPSPEDVPPVRGIHPATKEELSRASSVKEPLSALAFKVMQDEGRKLTYIRIYSGQMKAGEELYNAGKKKKEKASRLLKMHANKRERLEQAGAGDIVAVMGLKETVTGDTICDEKNPILLESMEFYEPVISQAIEAKTPADQEKLSLALLKLMEEDPTLRVKYDEETAQTVISGMGELHLEVVIDRLGREFNAHVNVGKPRVVHRETIRNKVDVEGHFERELGDKKHFGHVRLVLEPKERGSGVEIEWKADTAILPAEYVKAVEEGIQESLVSGAVAGYPVVDIRIKILEVGLKEGESSPIGYKIAASSAFRDGCIKGESVLLQPIMAVNVITPAEFMGDVIGDINARKGEIQTITPKGAMCEIRALVPLKALFGYSTDLRSATQGRAVFTMQFYAYDQG</sequence>
<accession>Q2LUL6</accession>
<gene>
    <name evidence="1" type="primary">fusA2</name>
    <name type="ordered locus">SYNAS_18950</name>
    <name type="ORF">SYN_01918</name>
</gene>
<evidence type="ECO:0000255" key="1">
    <source>
        <dbReference type="HAMAP-Rule" id="MF_00054"/>
    </source>
</evidence>
<name>EFG2_SYNAS</name>
<proteinExistence type="inferred from homology"/>
<organism>
    <name type="scientific">Syntrophus aciditrophicus (strain SB)</name>
    <dbReference type="NCBI Taxonomy" id="56780"/>
    <lineage>
        <taxon>Bacteria</taxon>
        <taxon>Pseudomonadati</taxon>
        <taxon>Thermodesulfobacteriota</taxon>
        <taxon>Syntrophia</taxon>
        <taxon>Syntrophales</taxon>
        <taxon>Syntrophaceae</taxon>
        <taxon>Syntrophus</taxon>
    </lineage>
</organism>